<comment type="function">
    <text evidence="1">Catalyzes the reversible interconversion of serine and glycine with tetrahydrofolate (THF) serving as the one-carbon carrier. This reaction serves as the major source of one-carbon groups required for the biosynthesis of purines, thymidylate, methionine, and other important biomolecules. Also exhibits THF-independent aldolase activity toward beta-hydroxyamino acids, producing glycine and aldehydes, via a retro-aldol mechanism.</text>
</comment>
<comment type="catalytic activity">
    <reaction evidence="1">
        <text>(6R)-5,10-methylene-5,6,7,8-tetrahydrofolate + glycine + H2O = (6S)-5,6,7,8-tetrahydrofolate + L-serine</text>
        <dbReference type="Rhea" id="RHEA:15481"/>
        <dbReference type="ChEBI" id="CHEBI:15377"/>
        <dbReference type="ChEBI" id="CHEBI:15636"/>
        <dbReference type="ChEBI" id="CHEBI:33384"/>
        <dbReference type="ChEBI" id="CHEBI:57305"/>
        <dbReference type="ChEBI" id="CHEBI:57453"/>
        <dbReference type="EC" id="2.1.2.1"/>
    </reaction>
</comment>
<comment type="cofactor">
    <cofactor evidence="1">
        <name>pyridoxal 5'-phosphate</name>
        <dbReference type="ChEBI" id="CHEBI:597326"/>
    </cofactor>
</comment>
<comment type="pathway">
    <text evidence="1">One-carbon metabolism; tetrahydrofolate interconversion.</text>
</comment>
<comment type="pathway">
    <text evidence="1">Amino-acid biosynthesis; glycine biosynthesis; glycine from L-serine: step 1/1.</text>
</comment>
<comment type="subunit">
    <text evidence="1">Homodimer.</text>
</comment>
<comment type="subcellular location">
    <subcellularLocation>
        <location evidence="1">Cytoplasm</location>
    </subcellularLocation>
</comment>
<comment type="similarity">
    <text evidence="1">Belongs to the SHMT family.</text>
</comment>
<feature type="chain" id="PRO_1000006308" description="Serine hydroxymethyltransferase">
    <location>
        <begin position="1"/>
        <end position="420"/>
    </location>
</feature>
<feature type="binding site" evidence="1">
    <location>
        <position position="121"/>
    </location>
    <ligand>
        <name>(6S)-5,6,7,8-tetrahydrofolate</name>
        <dbReference type="ChEBI" id="CHEBI:57453"/>
    </ligand>
</feature>
<feature type="binding site" evidence="1">
    <location>
        <begin position="125"/>
        <end position="127"/>
    </location>
    <ligand>
        <name>(6S)-5,6,7,8-tetrahydrofolate</name>
        <dbReference type="ChEBI" id="CHEBI:57453"/>
    </ligand>
</feature>
<feature type="binding site" evidence="1">
    <location>
        <position position="246"/>
    </location>
    <ligand>
        <name>(6S)-5,6,7,8-tetrahydrofolate</name>
        <dbReference type="ChEBI" id="CHEBI:57453"/>
    </ligand>
</feature>
<feature type="binding site" evidence="1">
    <location>
        <begin position="354"/>
        <end position="356"/>
    </location>
    <ligand>
        <name>(6S)-5,6,7,8-tetrahydrofolate</name>
        <dbReference type="ChEBI" id="CHEBI:57453"/>
    </ligand>
</feature>
<feature type="site" description="Plays an important role in substrate specificity" evidence="1">
    <location>
        <position position="229"/>
    </location>
</feature>
<feature type="modified residue" description="N6-(pyridoxal phosphate)lysine" evidence="1">
    <location>
        <position position="230"/>
    </location>
</feature>
<reference key="1">
    <citation type="submission" date="2007-09" db="EMBL/GenBank/DDBJ databases">
        <title>Complete genome sequence of Rickettsia canadensis.</title>
        <authorList>
            <person name="Madan A."/>
            <person name="Fahey J."/>
            <person name="Helton E."/>
            <person name="Ketteman M."/>
            <person name="Madan A."/>
            <person name="Rodrigues S."/>
            <person name="Sanchez A."/>
            <person name="Whiting M."/>
            <person name="Dasch G."/>
            <person name="Eremeeva M."/>
        </authorList>
    </citation>
    <scope>NUCLEOTIDE SEQUENCE [LARGE SCALE GENOMIC DNA]</scope>
    <source>
        <strain>McKiel</strain>
    </source>
</reference>
<keyword id="KW-0028">Amino-acid biosynthesis</keyword>
<keyword id="KW-0963">Cytoplasm</keyword>
<keyword id="KW-0554">One-carbon metabolism</keyword>
<keyword id="KW-0663">Pyridoxal phosphate</keyword>
<keyword id="KW-0808">Transferase</keyword>
<dbReference type="EC" id="2.1.2.1" evidence="1"/>
<dbReference type="EMBL" id="CP000409">
    <property type="protein sequence ID" value="ABV73876.1"/>
    <property type="molecule type" value="Genomic_DNA"/>
</dbReference>
<dbReference type="RefSeq" id="WP_012149071.1">
    <property type="nucleotide sequence ID" value="NC_009879.1"/>
</dbReference>
<dbReference type="SMR" id="A8EZU3"/>
<dbReference type="STRING" id="293613.A1E_04775"/>
<dbReference type="KEGG" id="rcm:A1E_04775"/>
<dbReference type="eggNOG" id="COG0112">
    <property type="taxonomic scope" value="Bacteria"/>
</dbReference>
<dbReference type="HOGENOM" id="CLU_022477_2_1_5"/>
<dbReference type="UniPathway" id="UPA00193"/>
<dbReference type="UniPathway" id="UPA00288">
    <property type="reaction ID" value="UER01023"/>
</dbReference>
<dbReference type="Proteomes" id="UP000007056">
    <property type="component" value="Chromosome"/>
</dbReference>
<dbReference type="GO" id="GO:0005829">
    <property type="term" value="C:cytosol"/>
    <property type="evidence" value="ECO:0007669"/>
    <property type="project" value="TreeGrafter"/>
</dbReference>
<dbReference type="GO" id="GO:0004372">
    <property type="term" value="F:glycine hydroxymethyltransferase activity"/>
    <property type="evidence" value="ECO:0007669"/>
    <property type="project" value="UniProtKB-UniRule"/>
</dbReference>
<dbReference type="GO" id="GO:0030170">
    <property type="term" value="F:pyridoxal phosphate binding"/>
    <property type="evidence" value="ECO:0007669"/>
    <property type="project" value="UniProtKB-UniRule"/>
</dbReference>
<dbReference type="GO" id="GO:0019264">
    <property type="term" value="P:glycine biosynthetic process from serine"/>
    <property type="evidence" value="ECO:0007669"/>
    <property type="project" value="UniProtKB-UniRule"/>
</dbReference>
<dbReference type="GO" id="GO:0035999">
    <property type="term" value="P:tetrahydrofolate interconversion"/>
    <property type="evidence" value="ECO:0007669"/>
    <property type="project" value="UniProtKB-UniRule"/>
</dbReference>
<dbReference type="CDD" id="cd00378">
    <property type="entry name" value="SHMT"/>
    <property type="match status" value="1"/>
</dbReference>
<dbReference type="FunFam" id="3.40.640.10:FF:000001">
    <property type="entry name" value="Serine hydroxymethyltransferase"/>
    <property type="match status" value="1"/>
</dbReference>
<dbReference type="Gene3D" id="3.90.1150.10">
    <property type="entry name" value="Aspartate Aminotransferase, domain 1"/>
    <property type="match status" value="1"/>
</dbReference>
<dbReference type="Gene3D" id="3.40.640.10">
    <property type="entry name" value="Type I PLP-dependent aspartate aminotransferase-like (Major domain)"/>
    <property type="match status" value="1"/>
</dbReference>
<dbReference type="HAMAP" id="MF_00051">
    <property type="entry name" value="SHMT"/>
    <property type="match status" value="1"/>
</dbReference>
<dbReference type="InterPro" id="IPR015424">
    <property type="entry name" value="PyrdxlP-dep_Trfase"/>
</dbReference>
<dbReference type="InterPro" id="IPR015421">
    <property type="entry name" value="PyrdxlP-dep_Trfase_major"/>
</dbReference>
<dbReference type="InterPro" id="IPR015422">
    <property type="entry name" value="PyrdxlP-dep_Trfase_small"/>
</dbReference>
<dbReference type="InterPro" id="IPR001085">
    <property type="entry name" value="Ser_HO-MeTrfase"/>
</dbReference>
<dbReference type="InterPro" id="IPR049943">
    <property type="entry name" value="Ser_HO-MeTrfase-like"/>
</dbReference>
<dbReference type="InterPro" id="IPR019798">
    <property type="entry name" value="Ser_HO-MeTrfase_PLP_BS"/>
</dbReference>
<dbReference type="InterPro" id="IPR039429">
    <property type="entry name" value="SHMT-like_dom"/>
</dbReference>
<dbReference type="NCBIfam" id="NF000586">
    <property type="entry name" value="PRK00011.1"/>
    <property type="match status" value="1"/>
</dbReference>
<dbReference type="PANTHER" id="PTHR11680">
    <property type="entry name" value="SERINE HYDROXYMETHYLTRANSFERASE"/>
    <property type="match status" value="1"/>
</dbReference>
<dbReference type="PANTHER" id="PTHR11680:SF35">
    <property type="entry name" value="SERINE HYDROXYMETHYLTRANSFERASE 1"/>
    <property type="match status" value="1"/>
</dbReference>
<dbReference type="Pfam" id="PF00464">
    <property type="entry name" value="SHMT"/>
    <property type="match status" value="1"/>
</dbReference>
<dbReference type="PIRSF" id="PIRSF000412">
    <property type="entry name" value="SHMT"/>
    <property type="match status" value="1"/>
</dbReference>
<dbReference type="SUPFAM" id="SSF53383">
    <property type="entry name" value="PLP-dependent transferases"/>
    <property type="match status" value="1"/>
</dbReference>
<dbReference type="PROSITE" id="PS00096">
    <property type="entry name" value="SHMT"/>
    <property type="match status" value="1"/>
</dbReference>
<organism>
    <name type="scientific">Rickettsia canadensis (strain McKiel)</name>
    <dbReference type="NCBI Taxonomy" id="293613"/>
    <lineage>
        <taxon>Bacteria</taxon>
        <taxon>Pseudomonadati</taxon>
        <taxon>Pseudomonadota</taxon>
        <taxon>Alphaproteobacteria</taxon>
        <taxon>Rickettsiales</taxon>
        <taxon>Rickettsiaceae</taxon>
        <taxon>Rickettsieae</taxon>
        <taxon>Rickettsia</taxon>
        <taxon>belli group</taxon>
    </lineage>
</organism>
<protein>
    <recommendedName>
        <fullName evidence="1">Serine hydroxymethyltransferase</fullName>
        <shortName evidence="1">SHMT</shortName>
        <shortName evidence="1">Serine methylase</shortName>
        <ecNumber evidence="1">2.1.2.1</ecNumber>
    </recommendedName>
</protein>
<proteinExistence type="inferred from homology"/>
<name>GLYA_RICCK</name>
<accession>A8EZU3</accession>
<gene>
    <name evidence="1" type="primary">glyA</name>
    <name type="ordered locus">A1E_04775</name>
</gene>
<sequence>MNIFNNNLHETDKDIDEIIKHEKIRQSSVIELIASENFISPAVLEAQGSILTNKYAEGYPSKRFYNGCEEVDKAENLAIERAKKLFNCKYANVQPHSGSQANQAVYLALLQPGDTILGMSLDSGGHLTHGAAPNISGKWFNAVSYSLNKETYLIDYNEIERLADLHKPKLLIAGFSAYPRNIDFAKFREIADKVGAYFMADIAHIAGLVATGEHQSPLAFAHIVTSTTHKTLRGPRGGLILSNDEEIGKKINSALFPGLQGGPLMHVIAAKAVAFQEALQPKYKSYIQQVISNAEALARILQERGYDILTGGTDNHIVLVDLRKDGITGKLAANSLDRAGITCNKNTIPFDKTSPFITSGIRLGTPACTTRGFKEKDFVLVAHMIADILDGCKNNEDNSKAEQKVLTEVTQLIKLFPFYG</sequence>
<evidence type="ECO:0000255" key="1">
    <source>
        <dbReference type="HAMAP-Rule" id="MF_00051"/>
    </source>
</evidence>